<geneLocation type="mitochondrion"/>
<sequence length="98" mass="10815">MVLIKLNIIVAFMLALSGVLIYRSHLMSTLLCLEGMMLSLFIFMAAMITHFHMFSISMMPLILLVFSACEAGVGLALLVSISNTYGNDQVQNLNLLQC</sequence>
<organism>
    <name type="scientific">Didelphis virginiana</name>
    <name type="common">North American opossum</name>
    <name type="synonym">Didelphis marsupialis virginiana</name>
    <dbReference type="NCBI Taxonomy" id="9267"/>
    <lineage>
        <taxon>Eukaryota</taxon>
        <taxon>Metazoa</taxon>
        <taxon>Chordata</taxon>
        <taxon>Craniata</taxon>
        <taxon>Vertebrata</taxon>
        <taxon>Euteleostomi</taxon>
        <taxon>Mammalia</taxon>
        <taxon>Metatheria</taxon>
        <taxon>Didelphimorphia</taxon>
        <taxon>Didelphidae</taxon>
        <taxon>Didelphis</taxon>
    </lineage>
</organism>
<comment type="function">
    <text evidence="2">Core subunit of the mitochondrial membrane respiratory chain NADH dehydrogenase (Complex I) which catalyzes electron transfer from NADH through the respiratory chain, using ubiquinone as an electron acceptor. Part of the enzyme membrane arm which is embedded in the lipid bilayer and involved in proton translocation.</text>
</comment>
<comment type="catalytic activity">
    <reaction evidence="2">
        <text>a ubiquinone + NADH + 5 H(+)(in) = a ubiquinol + NAD(+) + 4 H(+)(out)</text>
        <dbReference type="Rhea" id="RHEA:29091"/>
        <dbReference type="Rhea" id="RHEA-COMP:9565"/>
        <dbReference type="Rhea" id="RHEA-COMP:9566"/>
        <dbReference type="ChEBI" id="CHEBI:15378"/>
        <dbReference type="ChEBI" id="CHEBI:16389"/>
        <dbReference type="ChEBI" id="CHEBI:17976"/>
        <dbReference type="ChEBI" id="CHEBI:57540"/>
        <dbReference type="ChEBI" id="CHEBI:57945"/>
        <dbReference type="EC" id="7.1.1.2"/>
    </reaction>
    <physiologicalReaction direction="left-to-right" evidence="2">
        <dbReference type="Rhea" id="RHEA:29092"/>
    </physiologicalReaction>
</comment>
<comment type="subcellular location">
    <subcellularLocation>
        <location evidence="1">Mitochondrion membrane</location>
        <topology evidence="1">Multi-pass membrane protein</topology>
    </subcellularLocation>
</comment>
<comment type="similarity">
    <text evidence="4">Belongs to the complex I subunit 4L family.</text>
</comment>
<name>NU4LM_DIDVI</name>
<protein>
    <recommendedName>
        <fullName>NADH-ubiquinone oxidoreductase chain 4L</fullName>
        <ecNumber>7.1.1.2</ecNumber>
    </recommendedName>
    <alternativeName>
        <fullName>NADH dehydrogenase subunit 4L</fullName>
    </alternativeName>
</protein>
<proteinExistence type="inferred from homology"/>
<dbReference type="EC" id="7.1.1.2"/>
<dbReference type="EMBL" id="Z29573">
    <property type="protein sequence ID" value="CAA82685.1"/>
    <property type="molecule type" value="Genomic_DNA"/>
</dbReference>
<dbReference type="PIR" id="S47878">
    <property type="entry name" value="S47878"/>
</dbReference>
<dbReference type="RefSeq" id="NP_007103.1">
    <property type="nucleotide sequence ID" value="NC_001610.1"/>
</dbReference>
<dbReference type="SMR" id="P41307"/>
<dbReference type="GeneID" id="807780"/>
<dbReference type="CTD" id="4539"/>
<dbReference type="GO" id="GO:0031966">
    <property type="term" value="C:mitochondrial membrane"/>
    <property type="evidence" value="ECO:0007669"/>
    <property type="project" value="UniProtKB-SubCell"/>
</dbReference>
<dbReference type="GO" id="GO:0045271">
    <property type="term" value="C:respiratory chain complex I"/>
    <property type="evidence" value="ECO:0000250"/>
    <property type="project" value="UniProtKB"/>
</dbReference>
<dbReference type="GO" id="GO:0008137">
    <property type="term" value="F:NADH dehydrogenase (ubiquinone) activity"/>
    <property type="evidence" value="ECO:0000250"/>
    <property type="project" value="UniProtKB"/>
</dbReference>
<dbReference type="GO" id="GO:0042773">
    <property type="term" value="P:ATP synthesis coupled electron transport"/>
    <property type="evidence" value="ECO:0007669"/>
    <property type="project" value="InterPro"/>
</dbReference>
<dbReference type="FunFam" id="1.10.287.3510:FF:000002">
    <property type="entry name" value="NADH-ubiquinone oxidoreductase chain 4L"/>
    <property type="match status" value="1"/>
</dbReference>
<dbReference type="Gene3D" id="1.10.287.3510">
    <property type="match status" value="1"/>
</dbReference>
<dbReference type="InterPro" id="IPR001133">
    <property type="entry name" value="NADH_UbQ_OxRdtase_chain4L/K"/>
</dbReference>
<dbReference type="InterPro" id="IPR039428">
    <property type="entry name" value="NUOK/Mnh_C1-like"/>
</dbReference>
<dbReference type="PANTHER" id="PTHR11434:SF0">
    <property type="entry name" value="NADH-UBIQUINONE OXIDOREDUCTASE CHAIN 4L"/>
    <property type="match status" value="1"/>
</dbReference>
<dbReference type="PANTHER" id="PTHR11434">
    <property type="entry name" value="NADH-UBIQUINONE OXIDOREDUCTASE SUBUNIT ND4L"/>
    <property type="match status" value="1"/>
</dbReference>
<dbReference type="Pfam" id="PF00420">
    <property type="entry name" value="Oxidored_q2"/>
    <property type="match status" value="1"/>
</dbReference>
<reference key="1">
    <citation type="journal article" date="1994" name="Genetics">
        <title>The marsupial mitochondrial genome and the evolution of placental mammals.</title>
        <authorList>
            <person name="Janke A."/>
            <person name="Feldmaier-Fuchs G."/>
            <person name="Thomas K."/>
            <person name="von Haeseler A."/>
            <person name="Paabo S."/>
        </authorList>
    </citation>
    <scope>NUCLEOTIDE SEQUENCE [GENOMIC DNA]</scope>
    <source>
        <tissue>Liver</tissue>
    </source>
</reference>
<feature type="chain" id="PRO_0000118415" description="NADH-ubiquinone oxidoreductase chain 4L">
    <location>
        <begin position="1"/>
        <end position="98"/>
    </location>
</feature>
<feature type="transmembrane region" description="Helical" evidence="3">
    <location>
        <begin position="1"/>
        <end position="21"/>
    </location>
</feature>
<feature type="transmembrane region" description="Helical" evidence="3">
    <location>
        <begin position="36"/>
        <end position="56"/>
    </location>
</feature>
<feature type="transmembrane region" description="Helical" evidence="3">
    <location>
        <begin position="61"/>
        <end position="81"/>
    </location>
</feature>
<keyword id="KW-0249">Electron transport</keyword>
<keyword id="KW-0472">Membrane</keyword>
<keyword id="KW-0496">Mitochondrion</keyword>
<keyword id="KW-0520">NAD</keyword>
<keyword id="KW-0679">Respiratory chain</keyword>
<keyword id="KW-1278">Translocase</keyword>
<keyword id="KW-0812">Transmembrane</keyword>
<keyword id="KW-1133">Transmembrane helix</keyword>
<keyword id="KW-0813">Transport</keyword>
<keyword id="KW-0830">Ubiquinone</keyword>
<accession>P41307</accession>
<gene>
    <name type="primary">MT-ND4L</name>
    <name type="synonym">MTND4L</name>
    <name type="synonym">NADH4L</name>
    <name type="synonym">ND4L</name>
</gene>
<evidence type="ECO:0000250" key="1"/>
<evidence type="ECO:0000250" key="2">
    <source>
        <dbReference type="UniProtKB" id="P03901"/>
    </source>
</evidence>
<evidence type="ECO:0000255" key="3"/>
<evidence type="ECO:0000305" key="4"/>